<comment type="function">
    <text evidence="1 6">Plays a role in microtubule (MT) stabilization and this stabilization involves the maintenance of NUMA1 at the spindle poles. Colocalizes with polyglutamylated MTs to promote MT stabilization and regulate bipolar spindle formation in mitosis. Binding of CCSAP to centrosomes and the spindle around centrosomes during mitosis inhibits MT depolymerization, thereby stabilizing the mitotic spindle (PubMed:26562023). May play a role in embryonic development. May be required for proper cilia beating (By similarity).</text>
</comment>
<comment type="subunit">
    <text evidence="5 6">Associates with microtubules; the association occurs on polyglutamylated tubulin (PubMed:22493317, PubMed:26562023).</text>
</comment>
<comment type="subcellular location">
    <subcellularLocation>
        <location evidence="5">Cytoplasm</location>
        <location evidence="5">Cytoskeleton</location>
        <location evidence="5">Microtubule organizing center</location>
        <location evidence="5">Centrosome</location>
        <location evidence="5">Centriole</location>
    </subcellularLocation>
    <subcellularLocation>
        <location evidence="5 6">Cytoplasm</location>
        <location evidence="5 6">Cytoskeleton</location>
        <location evidence="5 6">Spindle</location>
    </subcellularLocation>
    <subcellularLocation>
        <location evidence="5">Cytoplasm</location>
        <location evidence="5">Cytoskeleton</location>
    </subcellularLocation>
    <subcellularLocation>
        <location evidence="5">Cytoplasm</location>
        <location evidence="5">Cytoskeleton</location>
        <location evidence="5">Cilium basal body</location>
    </subcellularLocation>
    <subcellularLocation>
        <location evidence="5">Cytoplasm</location>
        <location evidence="5">Cytoskeleton</location>
        <location evidence="5">Cilium axoneme</location>
    </subcellularLocation>
    <subcellularLocation>
        <location evidence="5">Cell projection</location>
        <location evidence="5">Axon</location>
    </subcellularLocation>
    <subcellularLocation>
        <location evidence="5">Cell projection</location>
        <location evidence="5">Cilium</location>
    </subcellularLocation>
    <subcellularLocation>
        <location evidence="4 6">Cytoplasm</location>
        <location evidence="4 6">Cytoskeleton</location>
        <location evidence="4 6">Microtubule organizing center</location>
        <location evidence="4 6">Centrosome</location>
    </subcellularLocation>
    <text evidence="5 6">Localizes to two to four centrioles throughout the cell cycle. Localizes to mitotic spindle microtubules during prometaphase and throughout the remainder of mitosis. Localizes to cytoskeleton on interphase. Localizes at the ciliary transition zone which connects the basal bodies to ciliary microtubules. Colocalizes with polyglutamylated tubulin.</text>
</comment>
<comment type="alternative products">
    <event type="alternative splicing"/>
    <isoform>
        <id>Q6IQ19-1</id>
        <name>1</name>
        <sequence type="displayed"/>
    </isoform>
    <isoform>
        <id>Q6IQ19-2</id>
        <name>2</name>
        <sequence type="described" ref="VSP_024582 VSP_024583"/>
    </isoform>
    <isoform>
        <id>Q6IQ19-3</id>
        <name>3</name>
        <sequence type="described" ref="VSP_024585 VSP_024586"/>
    </isoform>
    <isoform>
        <id>Q6IQ19-4</id>
        <name>4</name>
        <sequence type="described" ref="VSP_024584 VSP_024587"/>
    </isoform>
</comment>
<comment type="similarity">
    <text evidence="9">Belongs to the CCSAP family.</text>
</comment>
<keyword id="KW-0007">Acetylation</keyword>
<keyword id="KW-0025">Alternative splicing</keyword>
<keyword id="KW-0131">Cell cycle</keyword>
<keyword id="KW-0132">Cell division</keyword>
<keyword id="KW-0966">Cell projection</keyword>
<keyword id="KW-0969">Cilium</keyword>
<keyword id="KW-0963">Cytoplasm</keyword>
<keyword id="KW-0206">Cytoskeleton</keyword>
<keyword id="KW-0217">Developmental protein</keyword>
<keyword id="KW-0493">Microtubule</keyword>
<keyword id="KW-0498">Mitosis</keyword>
<keyword id="KW-1267">Proteomics identification</keyword>
<keyword id="KW-1185">Reference proteome</keyword>
<reference key="1">
    <citation type="journal article" date="2004" name="Nat. Genet.">
        <title>Complete sequencing and characterization of 21,243 full-length human cDNAs.</title>
        <authorList>
            <person name="Ota T."/>
            <person name="Suzuki Y."/>
            <person name="Nishikawa T."/>
            <person name="Otsuki T."/>
            <person name="Sugiyama T."/>
            <person name="Irie R."/>
            <person name="Wakamatsu A."/>
            <person name="Hayashi K."/>
            <person name="Sato H."/>
            <person name="Nagai K."/>
            <person name="Kimura K."/>
            <person name="Makita H."/>
            <person name="Sekine M."/>
            <person name="Obayashi M."/>
            <person name="Nishi T."/>
            <person name="Shibahara T."/>
            <person name="Tanaka T."/>
            <person name="Ishii S."/>
            <person name="Yamamoto J."/>
            <person name="Saito K."/>
            <person name="Kawai Y."/>
            <person name="Isono Y."/>
            <person name="Nakamura Y."/>
            <person name="Nagahari K."/>
            <person name="Murakami K."/>
            <person name="Yasuda T."/>
            <person name="Iwayanagi T."/>
            <person name="Wagatsuma M."/>
            <person name="Shiratori A."/>
            <person name="Sudo H."/>
            <person name="Hosoiri T."/>
            <person name="Kaku Y."/>
            <person name="Kodaira H."/>
            <person name="Kondo H."/>
            <person name="Sugawara M."/>
            <person name="Takahashi M."/>
            <person name="Kanda K."/>
            <person name="Yokoi T."/>
            <person name="Furuya T."/>
            <person name="Kikkawa E."/>
            <person name="Omura Y."/>
            <person name="Abe K."/>
            <person name="Kamihara K."/>
            <person name="Katsuta N."/>
            <person name="Sato K."/>
            <person name="Tanikawa M."/>
            <person name="Yamazaki M."/>
            <person name="Ninomiya K."/>
            <person name="Ishibashi T."/>
            <person name="Yamashita H."/>
            <person name="Murakawa K."/>
            <person name="Fujimori K."/>
            <person name="Tanai H."/>
            <person name="Kimata M."/>
            <person name="Watanabe M."/>
            <person name="Hiraoka S."/>
            <person name="Chiba Y."/>
            <person name="Ishida S."/>
            <person name="Ono Y."/>
            <person name="Takiguchi S."/>
            <person name="Watanabe S."/>
            <person name="Yosida M."/>
            <person name="Hotuta T."/>
            <person name="Kusano J."/>
            <person name="Kanehori K."/>
            <person name="Takahashi-Fujii A."/>
            <person name="Hara H."/>
            <person name="Tanase T.-O."/>
            <person name="Nomura Y."/>
            <person name="Togiya S."/>
            <person name="Komai F."/>
            <person name="Hara R."/>
            <person name="Takeuchi K."/>
            <person name="Arita M."/>
            <person name="Imose N."/>
            <person name="Musashino K."/>
            <person name="Yuuki H."/>
            <person name="Oshima A."/>
            <person name="Sasaki N."/>
            <person name="Aotsuka S."/>
            <person name="Yoshikawa Y."/>
            <person name="Matsunawa H."/>
            <person name="Ichihara T."/>
            <person name="Shiohata N."/>
            <person name="Sano S."/>
            <person name="Moriya S."/>
            <person name="Momiyama H."/>
            <person name="Satoh N."/>
            <person name="Takami S."/>
            <person name="Terashima Y."/>
            <person name="Suzuki O."/>
            <person name="Nakagawa S."/>
            <person name="Senoh A."/>
            <person name="Mizoguchi H."/>
            <person name="Goto Y."/>
            <person name="Shimizu F."/>
            <person name="Wakebe H."/>
            <person name="Hishigaki H."/>
            <person name="Watanabe T."/>
            <person name="Sugiyama A."/>
            <person name="Takemoto M."/>
            <person name="Kawakami B."/>
            <person name="Yamazaki M."/>
            <person name="Watanabe K."/>
            <person name="Kumagai A."/>
            <person name="Itakura S."/>
            <person name="Fukuzumi Y."/>
            <person name="Fujimori Y."/>
            <person name="Komiyama M."/>
            <person name="Tashiro H."/>
            <person name="Tanigami A."/>
            <person name="Fujiwara T."/>
            <person name="Ono T."/>
            <person name="Yamada K."/>
            <person name="Fujii Y."/>
            <person name="Ozaki K."/>
            <person name="Hirao M."/>
            <person name="Ohmori Y."/>
            <person name="Kawabata A."/>
            <person name="Hikiji T."/>
            <person name="Kobatake N."/>
            <person name="Inagaki H."/>
            <person name="Ikema Y."/>
            <person name="Okamoto S."/>
            <person name="Okitani R."/>
            <person name="Kawakami T."/>
            <person name="Noguchi S."/>
            <person name="Itoh T."/>
            <person name="Shigeta K."/>
            <person name="Senba T."/>
            <person name="Matsumura K."/>
            <person name="Nakajima Y."/>
            <person name="Mizuno T."/>
            <person name="Morinaga M."/>
            <person name="Sasaki M."/>
            <person name="Togashi T."/>
            <person name="Oyama M."/>
            <person name="Hata H."/>
            <person name="Watanabe M."/>
            <person name="Komatsu T."/>
            <person name="Mizushima-Sugano J."/>
            <person name="Satoh T."/>
            <person name="Shirai Y."/>
            <person name="Takahashi Y."/>
            <person name="Nakagawa K."/>
            <person name="Okumura K."/>
            <person name="Nagase T."/>
            <person name="Nomura N."/>
            <person name="Kikuchi H."/>
            <person name="Masuho Y."/>
            <person name="Yamashita R."/>
            <person name="Nakai K."/>
            <person name="Yada T."/>
            <person name="Nakamura Y."/>
            <person name="Ohara O."/>
            <person name="Isogai T."/>
            <person name="Sugano S."/>
        </authorList>
    </citation>
    <scope>NUCLEOTIDE SEQUENCE [LARGE SCALE MRNA] (ISOFORMS 1 AND 2)</scope>
    <source>
        <tissue>Brain</tissue>
        <tissue>Thalamus</tissue>
    </source>
</reference>
<reference key="2">
    <citation type="journal article" date="2006" name="Nature">
        <title>The DNA sequence and biological annotation of human chromosome 1.</title>
        <authorList>
            <person name="Gregory S.G."/>
            <person name="Barlow K.F."/>
            <person name="McLay K.E."/>
            <person name="Kaul R."/>
            <person name="Swarbreck D."/>
            <person name="Dunham A."/>
            <person name="Scott C.E."/>
            <person name="Howe K.L."/>
            <person name="Woodfine K."/>
            <person name="Spencer C.C.A."/>
            <person name="Jones M.C."/>
            <person name="Gillson C."/>
            <person name="Searle S."/>
            <person name="Zhou Y."/>
            <person name="Kokocinski F."/>
            <person name="McDonald L."/>
            <person name="Evans R."/>
            <person name="Phillips K."/>
            <person name="Atkinson A."/>
            <person name="Cooper R."/>
            <person name="Jones C."/>
            <person name="Hall R.E."/>
            <person name="Andrews T.D."/>
            <person name="Lloyd C."/>
            <person name="Ainscough R."/>
            <person name="Almeida J.P."/>
            <person name="Ambrose K.D."/>
            <person name="Anderson F."/>
            <person name="Andrew R.W."/>
            <person name="Ashwell R.I.S."/>
            <person name="Aubin K."/>
            <person name="Babbage A.K."/>
            <person name="Bagguley C.L."/>
            <person name="Bailey J."/>
            <person name="Beasley H."/>
            <person name="Bethel G."/>
            <person name="Bird C.P."/>
            <person name="Bray-Allen S."/>
            <person name="Brown J.Y."/>
            <person name="Brown A.J."/>
            <person name="Buckley D."/>
            <person name="Burton J."/>
            <person name="Bye J."/>
            <person name="Carder C."/>
            <person name="Chapman J.C."/>
            <person name="Clark S.Y."/>
            <person name="Clarke G."/>
            <person name="Clee C."/>
            <person name="Cobley V."/>
            <person name="Collier R.E."/>
            <person name="Corby N."/>
            <person name="Coville G.J."/>
            <person name="Davies J."/>
            <person name="Deadman R."/>
            <person name="Dunn M."/>
            <person name="Earthrowl M."/>
            <person name="Ellington A.G."/>
            <person name="Errington H."/>
            <person name="Frankish A."/>
            <person name="Frankland J."/>
            <person name="French L."/>
            <person name="Garner P."/>
            <person name="Garnett J."/>
            <person name="Gay L."/>
            <person name="Ghori M.R.J."/>
            <person name="Gibson R."/>
            <person name="Gilby L.M."/>
            <person name="Gillett W."/>
            <person name="Glithero R.J."/>
            <person name="Grafham D.V."/>
            <person name="Griffiths C."/>
            <person name="Griffiths-Jones S."/>
            <person name="Grocock R."/>
            <person name="Hammond S."/>
            <person name="Harrison E.S.I."/>
            <person name="Hart E."/>
            <person name="Haugen E."/>
            <person name="Heath P.D."/>
            <person name="Holmes S."/>
            <person name="Holt K."/>
            <person name="Howden P.J."/>
            <person name="Hunt A.R."/>
            <person name="Hunt S.E."/>
            <person name="Hunter G."/>
            <person name="Isherwood J."/>
            <person name="James R."/>
            <person name="Johnson C."/>
            <person name="Johnson D."/>
            <person name="Joy A."/>
            <person name="Kay M."/>
            <person name="Kershaw J.K."/>
            <person name="Kibukawa M."/>
            <person name="Kimberley A.M."/>
            <person name="King A."/>
            <person name="Knights A.J."/>
            <person name="Lad H."/>
            <person name="Laird G."/>
            <person name="Lawlor S."/>
            <person name="Leongamornlert D.A."/>
            <person name="Lloyd D.M."/>
            <person name="Loveland J."/>
            <person name="Lovell J."/>
            <person name="Lush M.J."/>
            <person name="Lyne R."/>
            <person name="Martin S."/>
            <person name="Mashreghi-Mohammadi M."/>
            <person name="Matthews L."/>
            <person name="Matthews N.S.W."/>
            <person name="McLaren S."/>
            <person name="Milne S."/>
            <person name="Mistry S."/>
            <person name="Moore M.J.F."/>
            <person name="Nickerson T."/>
            <person name="O'Dell C.N."/>
            <person name="Oliver K."/>
            <person name="Palmeiri A."/>
            <person name="Palmer S.A."/>
            <person name="Parker A."/>
            <person name="Patel D."/>
            <person name="Pearce A.V."/>
            <person name="Peck A.I."/>
            <person name="Pelan S."/>
            <person name="Phelps K."/>
            <person name="Phillimore B.J."/>
            <person name="Plumb R."/>
            <person name="Rajan J."/>
            <person name="Raymond C."/>
            <person name="Rouse G."/>
            <person name="Saenphimmachak C."/>
            <person name="Sehra H.K."/>
            <person name="Sheridan E."/>
            <person name="Shownkeen R."/>
            <person name="Sims S."/>
            <person name="Skuce C.D."/>
            <person name="Smith M."/>
            <person name="Steward C."/>
            <person name="Subramanian S."/>
            <person name="Sycamore N."/>
            <person name="Tracey A."/>
            <person name="Tromans A."/>
            <person name="Van Helmond Z."/>
            <person name="Wall M."/>
            <person name="Wallis J.M."/>
            <person name="White S."/>
            <person name="Whitehead S.L."/>
            <person name="Wilkinson J.E."/>
            <person name="Willey D.L."/>
            <person name="Williams H."/>
            <person name="Wilming L."/>
            <person name="Wray P.W."/>
            <person name="Wu Z."/>
            <person name="Coulson A."/>
            <person name="Vaudin M."/>
            <person name="Sulston J.E."/>
            <person name="Durbin R.M."/>
            <person name="Hubbard T."/>
            <person name="Wooster R."/>
            <person name="Dunham I."/>
            <person name="Carter N.P."/>
            <person name="McVean G."/>
            <person name="Ross M.T."/>
            <person name="Harrow J."/>
            <person name="Olson M.V."/>
            <person name="Beck S."/>
            <person name="Rogers J."/>
            <person name="Bentley D.R."/>
        </authorList>
    </citation>
    <scope>NUCLEOTIDE SEQUENCE [LARGE SCALE GENOMIC DNA]</scope>
</reference>
<reference key="3">
    <citation type="submission" date="2005-07" db="EMBL/GenBank/DDBJ databases">
        <authorList>
            <person name="Mural R.J."/>
            <person name="Istrail S."/>
            <person name="Sutton G.G."/>
            <person name="Florea L."/>
            <person name="Halpern A.L."/>
            <person name="Mobarry C.M."/>
            <person name="Lippert R."/>
            <person name="Walenz B."/>
            <person name="Shatkay H."/>
            <person name="Dew I."/>
            <person name="Miller J.R."/>
            <person name="Flanigan M.J."/>
            <person name="Edwards N.J."/>
            <person name="Bolanos R."/>
            <person name="Fasulo D."/>
            <person name="Halldorsson B.V."/>
            <person name="Hannenhalli S."/>
            <person name="Turner R."/>
            <person name="Yooseph S."/>
            <person name="Lu F."/>
            <person name="Nusskern D.R."/>
            <person name="Shue B.C."/>
            <person name="Zheng X.H."/>
            <person name="Zhong F."/>
            <person name="Delcher A.L."/>
            <person name="Huson D.H."/>
            <person name="Kravitz S.A."/>
            <person name="Mouchard L."/>
            <person name="Reinert K."/>
            <person name="Remington K.A."/>
            <person name="Clark A.G."/>
            <person name="Waterman M.S."/>
            <person name="Eichler E.E."/>
            <person name="Adams M.D."/>
            <person name="Hunkapiller M.W."/>
            <person name="Myers E.W."/>
            <person name="Venter J.C."/>
        </authorList>
    </citation>
    <scope>NUCLEOTIDE SEQUENCE [LARGE SCALE GENOMIC DNA]</scope>
</reference>
<reference key="4">
    <citation type="journal article" date="2004" name="Genome Res.">
        <title>The status, quality, and expansion of the NIH full-length cDNA project: the Mammalian Gene Collection (MGC).</title>
        <authorList>
            <consortium name="The MGC Project Team"/>
        </authorList>
    </citation>
    <scope>NUCLEOTIDE SEQUENCE [LARGE SCALE MRNA] (ISOFORMS 1; 3 AND 4)</scope>
    <source>
        <tissue>Brain</tissue>
        <tissue>Duodenum</tissue>
        <tissue>Placenta</tissue>
    </source>
</reference>
<reference key="5">
    <citation type="journal article" date="2003" name="Nature">
        <title>Proteomic characterization of the human centrosome by protein correlation profiling.</title>
        <authorList>
            <person name="Andersen J.S."/>
            <person name="Wilkinson C.J."/>
            <person name="Mayor T."/>
            <person name="Mortensen P."/>
            <person name="Nigg E.A."/>
            <person name="Mann M."/>
        </authorList>
    </citation>
    <scope>IDENTIFICATION BY MASS SPECTROMETRY</scope>
    <scope>SUBCELLULAR LOCATION [LARGE SCALE ANALYSIS]</scope>
    <source>
        <tissue>Lymphoblast</tissue>
    </source>
</reference>
<reference key="6">
    <citation type="journal article" date="2012" name="Mol. Biol. Cell">
        <title>CSAP localizes to polyglutamylated microtubules and promotes proper cilia function and zebrafish development.</title>
        <authorList>
            <person name="Backer C.B."/>
            <person name="Gutzman J.H."/>
            <person name="Pearson C.G."/>
            <person name="Cheeseman I.M."/>
        </authorList>
    </citation>
    <scope>ASSOCIATION WITH MICROTUBULES</scope>
    <scope>SUBCELLULAR LOCATION</scope>
</reference>
<reference key="7">
    <citation type="journal article" date="2012" name="Proc. Natl. Acad. Sci. U.S.A.">
        <title>N-terminal acetylome analyses and functional insights of the N-terminal acetyltransferase NatB.</title>
        <authorList>
            <person name="Van Damme P."/>
            <person name="Lasa M."/>
            <person name="Polevoda B."/>
            <person name="Gazquez C."/>
            <person name="Elosegui-Artola A."/>
            <person name="Kim D.S."/>
            <person name="De Juan-Pardo E."/>
            <person name="Demeyer K."/>
            <person name="Hole K."/>
            <person name="Larrea E."/>
            <person name="Timmerman E."/>
            <person name="Prieto J."/>
            <person name="Arnesen T."/>
            <person name="Sherman F."/>
            <person name="Gevaert K."/>
            <person name="Aldabe R."/>
        </authorList>
    </citation>
    <scope>ACETYLATION [LARGE SCALE ANALYSIS] AT MET-1</scope>
    <scope>IDENTIFICATION BY MASS SPECTROMETRY [LARGE SCALE ANALYSIS]</scope>
</reference>
<reference key="8">
    <citation type="journal article" date="2015" name="PLoS ONE">
        <title>Polyglutamylated tubulin binding protein C1orf96/CSAP is involved in microtubule stabilization in mitotic spindles.</title>
        <authorList>
            <person name="Ohta S."/>
            <person name="Hamada M."/>
            <person name="Sato N."/>
            <person name="Toramoto I."/>
        </authorList>
    </citation>
    <scope>FUNCTION</scope>
    <scope>SUBCELLULAR LOCATION</scope>
    <scope>ASSOCIATION WITH MICROTUBULES</scope>
</reference>
<organism>
    <name type="scientific">Homo sapiens</name>
    <name type="common">Human</name>
    <dbReference type="NCBI Taxonomy" id="9606"/>
    <lineage>
        <taxon>Eukaryota</taxon>
        <taxon>Metazoa</taxon>
        <taxon>Chordata</taxon>
        <taxon>Craniata</taxon>
        <taxon>Vertebrata</taxon>
        <taxon>Euteleostomi</taxon>
        <taxon>Mammalia</taxon>
        <taxon>Eutheria</taxon>
        <taxon>Euarchontoglires</taxon>
        <taxon>Primates</taxon>
        <taxon>Haplorrhini</taxon>
        <taxon>Catarrhini</taxon>
        <taxon>Hominidae</taxon>
        <taxon>Homo</taxon>
    </lineage>
</organism>
<name>CCSAP_HUMAN</name>
<dbReference type="EMBL" id="AK123465">
    <property type="protein sequence ID" value="BAC85619.1"/>
    <property type="molecule type" value="mRNA"/>
</dbReference>
<dbReference type="EMBL" id="AK291437">
    <property type="protein sequence ID" value="BAF84126.1"/>
    <property type="molecule type" value="mRNA"/>
</dbReference>
<dbReference type="EMBL" id="AL117350">
    <property type="status" value="NOT_ANNOTATED_CDS"/>
    <property type="molecule type" value="Genomic_DNA"/>
</dbReference>
<dbReference type="EMBL" id="CH471098">
    <property type="protein sequence ID" value="EAW69897.1"/>
    <property type="molecule type" value="Genomic_DNA"/>
</dbReference>
<dbReference type="EMBL" id="BC015419">
    <property type="protein sequence ID" value="AAH15419.1"/>
    <property type="molecule type" value="mRNA"/>
</dbReference>
<dbReference type="EMBL" id="BC039241">
    <property type="protein sequence ID" value="AAH39241.1"/>
    <property type="molecule type" value="mRNA"/>
</dbReference>
<dbReference type="EMBL" id="BC060777">
    <property type="protein sequence ID" value="AAH60777.1"/>
    <property type="molecule type" value="mRNA"/>
</dbReference>
<dbReference type="EMBL" id="BC071609">
    <property type="protein sequence ID" value="AAH71609.1"/>
    <property type="molecule type" value="mRNA"/>
</dbReference>
<dbReference type="CCDS" id="CCDS1577.1">
    <molecule id="Q6IQ19-1"/>
</dbReference>
<dbReference type="CCDS" id="CCDS91172.1">
    <molecule id="Q6IQ19-2"/>
</dbReference>
<dbReference type="RefSeq" id="NP_001397865.1">
    <molecule id="Q6IQ19-2"/>
    <property type="nucleotide sequence ID" value="NM_001410936.1"/>
</dbReference>
<dbReference type="RefSeq" id="NP_660300.3">
    <molecule id="Q6IQ19-1"/>
    <property type="nucleotide sequence ID" value="NM_145257.4"/>
</dbReference>
<dbReference type="RefSeq" id="XP_054190225.1">
    <molecule id="Q6IQ19-1"/>
    <property type="nucleotide sequence ID" value="XM_054334250.1"/>
</dbReference>
<dbReference type="SMR" id="Q6IQ19"/>
<dbReference type="BioGRID" id="126011">
    <property type="interactions" value="4"/>
</dbReference>
<dbReference type="FunCoup" id="Q6IQ19">
    <property type="interactions" value="220"/>
</dbReference>
<dbReference type="IntAct" id="Q6IQ19">
    <property type="interactions" value="4"/>
</dbReference>
<dbReference type="MINT" id="Q6IQ19"/>
<dbReference type="STRING" id="9606.ENSP00000284617"/>
<dbReference type="GlyGen" id="Q6IQ19">
    <property type="glycosylation" value="1 site, 1 O-linked glycan (1 site)"/>
</dbReference>
<dbReference type="iPTMnet" id="Q6IQ19"/>
<dbReference type="PhosphoSitePlus" id="Q6IQ19"/>
<dbReference type="BioMuta" id="CCSAP"/>
<dbReference type="DMDM" id="145558871"/>
<dbReference type="jPOST" id="Q6IQ19"/>
<dbReference type="MassIVE" id="Q6IQ19"/>
<dbReference type="PaxDb" id="9606-ENSP00000284617"/>
<dbReference type="PeptideAtlas" id="Q6IQ19"/>
<dbReference type="ProteomicsDB" id="66472">
    <molecule id="Q6IQ19-1"/>
</dbReference>
<dbReference type="ProteomicsDB" id="66473">
    <molecule id="Q6IQ19-2"/>
</dbReference>
<dbReference type="ProteomicsDB" id="66474">
    <molecule id="Q6IQ19-3"/>
</dbReference>
<dbReference type="ProteomicsDB" id="66475">
    <molecule id="Q6IQ19-4"/>
</dbReference>
<dbReference type="Pumba" id="Q6IQ19"/>
<dbReference type="Antibodypedia" id="34675">
    <property type="antibodies" value="90 antibodies from 16 providers"/>
</dbReference>
<dbReference type="DNASU" id="126731"/>
<dbReference type="Ensembl" id="ENST00000284617.7">
    <molecule id="Q6IQ19-1"/>
    <property type="protein sequence ID" value="ENSP00000284617.2"/>
    <property type="gene ID" value="ENSG00000154429.11"/>
</dbReference>
<dbReference type="Ensembl" id="ENST00000366686.1">
    <molecule id="Q6IQ19-2"/>
    <property type="protein sequence ID" value="ENSP00000355647.1"/>
    <property type="gene ID" value="ENSG00000154429.11"/>
</dbReference>
<dbReference type="Ensembl" id="ENST00000366687.5">
    <molecule id="Q6IQ19-1"/>
    <property type="protein sequence ID" value="ENSP00000355648.1"/>
    <property type="gene ID" value="ENSG00000154429.11"/>
</dbReference>
<dbReference type="GeneID" id="126731"/>
<dbReference type="KEGG" id="hsa:126731"/>
<dbReference type="MANE-Select" id="ENST00000284617.7">
    <property type="protein sequence ID" value="ENSP00000284617.2"/>
    <property type="RefSeq nucleotide sequence ID" value="NM_145257.5"/>
    <property type="RefSeq protein sequence ID" value="NP_660300.3"/>
</dbReference>
<dbReference type="UCSC" id="uc001htl.4">
    <molecule id="Q6IQ19-1"/>
    <property type="organism name" value="human"/>
</dbReference>
<dbReference type="AGR" id="HGNC:29578"/>
<dbReference type="CTD" id="126731"/>
<dbReference type="DisGeNET" id="126731"/>
<dbReference type="GeneCards" id="CCSAP"/>
<dbReference type="HGNC" id="HGNC:29578">
    <property type="gene designation" value="CCSAP"/>
</dbReference>
<dbReference type="HPA" id="ENSG00000154429">
    <property type="expression patterns" value="Tissue enhanced (brain, retina)"/>
</dbReference>
<dbReference type="neXtProt" id="NX_Q6IQ19"/>
<dbReference type="OpenTargets" id="ENSG00000154429"/>
<dbReference type="PharmGKB" id="PA142672480"/>
<dbReference type="VEuPathDB" id="HostDB:ENSG00000154429"/>
<dbReference type="eggNOG" id="ENOG502S0N0">
    <property type="taxonomic scope" value="Eukaryota"/>
</dbReference>
<dbReference type="GeneTree" id="ENSGT00390000003512"/>
<dbReference type="HOGENOM" id="CLU_054214_0_0_1"/>
<dbReference type="InParanoid" id="Q6IQ19"/>
<dbReference type="OMA" id="WETYAKC"/>
<dbReference type="OrthoDB" id="6616361at2759"/>
<dbReference type="PAN-GO" id="Q6IQ19">
    <property type="GO annotations" value="8 GO annotations based on evolutionary models"/>
</dbReference>
<dbReference type="PhylomeDB" id="Q6IQ19"/>
<dbReference type="TreeFam" id="TF332378"/>
<dbReference type="PathwayCommons" id="Q6IQ19"/>
<dbReference type="SignaLink" id="Q6IQ19"/>
<dbReference type="BioGRID-ORCS" id="126731">
    <property type="hits" value="20 hits in 1147 CRISPR screens"/>
</dbReference>
<dbReference type="CD-CODE" id="8C2F96ED">
    <property type="entry name" value="Centrosome"/>
</dbReference>
<dbReference type="GenomeRNAi" id="126731"/>
<dbReference type="Pharos" id="Q6IQ19">
    <property type="development level" value="Tbio"/>
</dbReference>
<dbReference type="PRO" id="PR:Q6IQ19"/>
<dbReference type="Proteomes" id="UP000005640">
    <property type="component" value="Chromosome 1"/>
</dbReference>
<dbReference type="RNAct" id="Q6IQ19">
    <property type="molecule type" value="protein"/>
</dbReference>
<dbReference type="Bgee" id="ENSG00000154429">
    <property type="expression patterns" value="Expressed in Brodmann (1909) area 46 and 186 other cell types or tissues"/>
</dbReference>
<dbReference type="GO" id="GO:0030424">
    <property type="term" value="C:axon"/>
    <property type="evidence" value="ECO:0000314"/>
    <property type="project" value="UniProtKB"/>
</dbReference>
<dbReference type="GO" id="GO:0005930">
    <property type="term" value="C:axoneme"/>
    <property type="evidence" value="ECO:0000314"/>
    <property type="project" value="UniProtKB"/>
</dbReference>
<dbReference type="GO" id="GO:0005814">
    <property type="term" value="C:centriole"/>
    <property type="evidence" value="ECO:0000314"/>
    <property type="project" value="UniProtKB"/>
</dbReference>
<dbReference type="GO" id="GO:0005813">
    <property type="term" value="C:centrosome"/>
    <property type="evidence" value="ECO:0000314"/>
    <property type="project" value="UniProtKB"/>
</dbReference>
<dbReference type="GO" id="GO:0036064">
    <property type="term" value="C:ciliary basal body"/>
    <property type="evidence" value="ECO:0000314"/>
    <property type="project" value="UniProtKB"/>
</dbReference>
<dbReference type="GO" id="GO:0035869">
    <property type="term" value="C:ciliary transition zone"/>
    <property type="evidence" value="ECO:0000314"/>
    <property type="project" value="UniProtKB"/>
</dbReference>
<dbReference type="GO" id="GO:0005929">
    <property type="term" value="C:cilium"/>
    <property type="evidence" value="ECO:0000314"/>
    <property type="project" value="UniProtKB"/>
</dbReference>
<dbReference type="GO" id="GO:0072686">
    <property type="term" value="C:mitotic spindle"/>
    <property type="evidence" value="ECO:0000314"/>
    <property type="project" value="UniProtKB"/>
</dbReference>
<dbReference type="GO" id="GO:0061673">
    <property type="term" value="C:mitotic spindle astral microtubule"/>
    <property type="evidence" value="ECO:0000314"/>
    <property type="project" value="UniProtKB"/>
</dbReference>
<dbReference type="GO" id="GO:0005819">
    <property type="term" value="C:spindle"/>
    <property type="evidence" value="ECO:0000314"/>
    <property type="project" value="UniProtKB"/>
</dbReference>
<dbReference type="GO" id="GO:0008017">
    <property type="term" value="F:microtubule binding"/>
    <property type="evidence" value="ECO:0000314"/>
    <property type="project" value="UniProtKB"/>
</dbReference>
<dbReference type="GO" id="GO:0051301">
    <property type="term" value="P:cell division"/>
    <property type="evidence" value="ECO:0007669"/>
    <property type="project" value="UniProtKB-KW"/>
</dbReference>
<dbReference type="GO" id="GO:1990755">
    <property type="term" value="P:mitotic spindle microtubule depolymerization"/>
    <property type="evidence" value="ECO:0000314"/>
    <property type="project" value="UniProtKB"/>
</dbReference>
<dbReference type="GO" id="GO:0045995">
    <property type="term" value="P:regulation of embryonic development"/>
    <property type="evidence" value="ECO:0000250"/>
    <property type="project" value="UniProtKB"/>
</dbReference>
<dbReference type="GO" id="GO:1901673">
    <property type="term" value="P:regulation of mitotic spindle assembly"/>
    <property type="evidence" value="ECO:0000315"/>
    <property type="project" value="UniProtKB"/>
</dbReference>
<dbReference type="InterPro" id="IPR029774">
    <property type="entry name" value="CSAP"/>
</dbReference>
<dbReference type="PANTHER" id="PTHR31022">
    <property type="entry name" value="CENTRIOLE, CILIA AND SPINDLE-ASSOCIATED PROTEIN"/>
    <property type="match status" value="1"/>
</dbReference>
<dbReference type="PANTHER" id="PTHR31022:SF4">
    <property type="entry name" value="CENTRIOLE, CILIA AND SPINDLE-ASSOCIATED PROTEIN"/>
    <property type="match status" value="1"/>
</dbReference>
<dbReference type="Pfam" id="PF15748">
    <property type="entry name" value="CCSAP"/>
    <property type="match status" value="1"/>
</dbReference>
<gene>
    <name type="primary">CCSAP</name>
    <name type="synonym">C1orf96</name>
    <name type="synonym">CSAP</name>
</gene>
<sequence>MSPGSGVKSEYMKRYQEPRWEEYGPCYRELLHYRLGRRLLEQAHAPWLWDDWGPAGSSEDSASSESSGAGGPAPRCAPPSPPPPVEPATQEEAERRARGAPEEQDAEAGDAEAEDAEDAALPALPVKDVEDKPEQQTRTRETDKSPTSTEPRQQPSALFARGNRKAVKSPQRSSSKIKENKHPFALYGWGEKQTDTGSQKTHNVCASAPVHEIHESALRAKNRRQVEKRKLVAQRQRAHSVDVEKNRKMKASSSENPWMTEYMRCYSARA</sequence>
<protein>
    <recommendedName>
        <fullName>Centriole, cilia and spindle-associated protein</fullName>
    </recommendedName>
</protein>
<accession>Q6IQ19</accession>
<accession>A8K5X2</accession>
<accession>Q6P9G2</accession>
<accession>Q6ZW85</accession>
<accession>Q8IXU1</accession>
<accession>Q96BM2</accession>
<feature type="chain" id="PRO_0000284643" description="Centriole, cilia and spindle-associated protein">
    <location>
        <begin position="1"/>
        <end position="270"/>
    </location>
</feature>
<feature type="region of interest" description="Disordered" evidence="3">
    <location>
        <begin position="50"/>
        <end position="201"/>
    </location>
</feature>
<feature type="region of interest" description="Disordered" evidence="3">
    <location>
        <begin position="231"/>
        <end position="255"/>
    </location>
</feature>
<feature type="short sequence motif" description="ST]-E-Y-X(3)-Y motif 1; required for efficient microtubule binding and stabilization" evidence="2">
    <location>
        <begin position="9"/>
        <end position="15"/>
    </location>
</feature>
<feature type="short sequence motif" description="ST]-E-Y-X(3)-Y motif 2; required for efficient microtubule binding and stabilization" evidence="2">
    <location>
        <begin position="260"/>
        <end position="266"/>
    </location>
</feature>
<feature type="compositionally biased region" description="Low complexity" evidence="3">
    <location>
        <begin position="53"/>
        <end position="67"/>
    </location>
</feature>
<feature type="compositionally biased region" description="Pro residues" evidence="3">
    <location>
        <begin position="75"/>
        <end position="86"/>
    </location>
</feature>
<feature type="compositionally biased region" description="Basic and acidic residues" evidence="3">
    <location>
        <begin position="92"/>
        <end position="101"/>
    </location>
</feature>
<feature type="compositionally biased region" description="Acidic residues" evidence="3">
    <location>
        <begin position="102"/>
        <end position="118"/>
    </location>
</feature>
<feature type="compositionally biased region" description="Basic and acidic residues" evidence="3">
    <location>
        <begin position="127"/>
        <end position="144"/>
    </location>
</feature>
<feature type="compositionally biased region" description="Polar residues" evidence="3">
    <location>
        <begin position="145"/>
        <end position="156"/>
    </location>
</feature>
<feature type="modified residue" description="N-acetylmethionine" evidence="10">
    <location>
        <position position="1"/>
    </location>
</feature>
<feature type="splice variant" id="VSP_024582" description="In isoform 2." evidence="7">
    <location>
        <begin position="1"/>
        <end position="114"/>
    </location>
</feature>
<feature type="splice variant" id="VSP_024583" description="In isoform 2." evidence="7">
    <original>DAEDAALP</original>
    <variation>MVPVFTSS</variation>
    <location>
        <begin position="115"/>
        <end position="122"/>
    </location>
</feature>
<feature type="splice variant" id="VSP_024584" description="In isoform 4." evidence="8">
    <original>ALPVKDVEDKPEQQTRTR</original>
    <variation>GTRPGGEREGPARRDGLL</variation>
    <location>
        <begin position="123"/>
        <end position="140"/>
    </location>
</feature>
<feature type="splice variant" id="VSP_024585" description="In isoform 3." evidence="8">
    <original>ALPVKDV</original>
    <variation>GNAWLRT</variation>
    <location>
        <begin position="123"/>
        <end position="129"/>
    </location>
</feature>
<feature type="splice variant" id="VSP_024586" description="In isoform 3." evidence="8">
    <location>
        <begin position="130"/>
        <end position="270"/>
    </location>
</feature>
<feature type="splice variant" id="VSP_024587" description="In isoform 4." evidence="8">
    <location>
        <begin position="141"/>
        <end position="270"/>
    </location>
</feature>
<feature type="sequence variant" id="VAR_059594" description="In dbSNP:rs6587326.">
    <original>A</original>
    <variation>V</variation>
    <location>
        <position position="123"/>
    </location>
</feature>
<feature type="sequence conflict" description="In Ref. 4; AAH71609." evidence="9" ref="4">
    <original>R</original>
    <variation>G</variation>
    <location>
        <position position="28"/>
    </location>
</feature>
<evidence type="ECO:0000250" key="1">
    <source>
        <dbReference type="UniProtKB" id="Q6P3G4"/>
    </source>
</evidence>
<evidence type="ECO:0000250" key="2">
    <source>
        <dbReference type="UniProtKB" id="Q8TC05"/>
    </source>
</evidence>
<evidence type="ECO:0000256" key="3">
    <source>
        <dbReference type="SAM" id="MobiDB-lite"/>
    </source>
</evidence>
<evidence type="ECO:0000269" key="4">
    <source>
    </source>
</evidence>
<evidence type="ECO:0000269" key="5">
    <source>
    </source>
</evidence>
<evidence type="ECO:0000269" key="6">
    <source>
    </source>
</evidence>
<evidence type="ECO:0000303" key="7">
    <source>
    </source>
</evidence>
<evidence type="ECO:0000303" key="8">
    <source>
    </source>
</evidence>
<evidence type="ECO:0000305" key="9"/>
<evidence type="ECO:0007744" key="10">
    <source>
    </source>
</evidence>
<proteinExistence type="evidence at protein level"/>